<reference key="1">
    <citation type="journal article" date="2006" name="Mol. Phylogenet. Evol.">
        <title>Molecular systematics of Vampyressine bats (Phyllostomidae: Stenodermatinae) with comparison of direct and indirect surveys of mitochondrial DNA variation.</title>
        <authorList>
            <person name="Hoofer S.R."/>
            <person name="Baker R.J."/>
        </authorList>
    </citation>
    <scope>NUCLEOTIDE SEQUENCE [GENOMIC DNA]</scope>
</reference>
<proteinExistence type="inferred from homology"/>
<dbReference type="EC" id="7.1.1.2"/>
<dbReference type="EMBL" id="DQ312366">
    <property type="protein sequence ID" value="ABC47514.1"/>
    <property type="molecule type" value="Genomic_DNA"/>
</dbReference>
<dbReference type="EMBL" id="DQ312367">
    <property type="protein sequence ID" value="ABC47517.1"/>
    <property type="molecule type" value="Genomic_DNA"/>
</dbReference>
<dbReference type="EMBL" id="DQ312368">
    <property type="protein sequence ID" value="ABC47520.1"/>
    <property type="molecule type" value="Genomic_DNA"/>
</dbReference>
<dbReference type="SMR" id="Q1HV41"/>
<dbReference type="GO" id="GO:0005743">
    <property type="term" value="C:mitochondrial inner membrane"/>
    <property type="evidence" value="ECO:0000250"/>
    <property type="project" value="UniProtKB"/>
</dbReference>
<dbReference type="GO" id="GO:0045271">
    <property type="term" value="C:respiratory chain complex I"/>
    <property type="evidence" value="ECO:0000250"/>
    <property type="project" value="UniProtKB"/>
</dbReference>
<dbReference type="GO" id="GO:0008137">
    <property type="term" value="F:NADH dehydrogenase (ubiquinone) activity"/>
    <property type="evidence" value="ECO:0000250"/>
    <property type="project" value="UniProtKB"/>
</dbReference>
<dbReference type="GO" id="GO:0042773">
    <property type="term" value="P:ATP synthesis coupled electron transport"/>
    <property type="evidence" value="ECO:0007669"/>
    <property type="project" value="InterPro"/>
</dbReference>
<dbReference type="FunFam" id="1.10.287.3510:FF:000002">
    <property type="entry name" value="NADH-ubiquinone oxidoreductase chain 4L"/>
    <property type="match status" value="1"/>
</dbReference>
<dbReference type="Gene3D" id="1.10.287.3510">
    <property type="match status" value="1"/>
</dbReference>
<dbReference type="InterPro" id="IPR001133">
    <property type="entry name" value="NADH_UbQ_OxRdtase_chain4L/K"/>
</dbReference>
<dbReference type="InterPro" id="IPR039428">
    <property type="entry name" value="NUOK/Mnh_C1-like"/>
</dbReference>
<dbReference type="PANTHER" id="PTHR11434:SF0">
    <property type="entry name" value="NADH-UBIQUINONE OXIDOREDUCTASE CHAIN 4L"/>
    <property type="match status" value="1"/>
</dbReference>
<dbReference type="PANTHER" id="PTHR11434">
    <property type="entry name" value="NADH-UBIQUINONE OXIDOREDUCTASE SUBUNIT ND4L"/>
    <property type="match status" value="1"/>
</dbReference>
<dbReference type="Pfam" id="PF00420">
    <property type="entry name" value="Oxidored_q2"/>
    <property type="match status" value="1"/>
</dbReference>
<protein>
    <recommendedName>
        <fullName>NADH-ubiquinone oxidoreductase chain 4L</fullName>
        <ecNumber>7.1.1.2</ecNumber>
    </recommendedName>
    <alternativeName>
        <fullName>NADH dehydrogenase subunit 4L</fullName>
    </alternativeName>
</protein>
<evidence type="ECO:0000250" key="1">
    <source>
        <dbReference type="UniProtKB" id="P03901"/>
    </source>
</evidence>
<evidence type="ECO:0000250" key="2">
    <source>
        <dbReference type="UniProtKB" id="P03902"/>
    </source>
</evidence>
<evidence type="ECO:0000255" key="3"/>
<evidence type="ECO:0000305" key="4"/>
<organism>
    <name type="scientific">Ectophylla alba</name>
    <name type="common">White bat</name>
    <name type="synonym">Honduran fruit bat</name>
    <dbReference type="NCBI Taxonomy" id="148036"/>
    <lineage>
        <taxon>Eukaryota</taxon>
        <taxon>Metazoa</taxon>
        <taxon>Chordata</taxon>
        <taxon>Craniata</taxon>
        <taxon>Vertebrata</taxon>
        <taxon>Euteleostomi</taxon>
        <taxon>Mammalia</taxon>
        <taxon>Eutheria</taxon>
        <taxon>Laurasiatheria</taxon>
        <taxon>Chiroptera</taxon>
        <taxon>Yangochiroptera</taxon>
        <taxon>Phyllostomidae</taxon>
        <taxon>Stenodermatinae</taxon>
        <taxon>Ectophylla</taxon>
    </lineage>
</organism>
<name>NU4LM_ECTAL</name>
<gene>
    <name type="primary">MT-ND4L</name>
    <name type="synonym">MTND4L</name>
    <name type="synonym">NADH4L</name>
    <name type="synonym">ND4L</name>
</gene>
<keyword id="KW-0249">Electron transport</keyword>
<keyword id="KW-0472">Membrane</keyword>
<keyword id="KW-0496">Mitochondrion</keyword>
<keyword id="KW-0999">Mitochondrion inner membrane</keyword>
<keyword id="KW-0520">NAD</keyword>
<keyword id="KW-0679">Respiratory chain</keyword>
<keyword id="KW-1278">Translocase</keyword>
<keyword id="KW-0812">Transmembrane</keyword>
<keyword id="KW-1133">Transmembrane helix</keyword>
<keyword id="KW-0813">Transport</keyword>
<keyword id="KW-0830">Ubiquinone</keyword>
<feature type="chain" id="PRO_0000275011" description="NADH-ubiquinone oxidoreductase chain 4L">
    <location>
        <begin position="1"/>
        <end position="98"/>
    </location>
</feature>
<feature type="transmembrane region" description="Helical" evidence="3">
    <location>
        <begin position="1"/>
        <end position="21"/>
    </location>
</feature>
<feature type="transmembrane region" description="Helical" evidence="3">
    <location>
        <begin position="29"/>
        <end position="49"/>
    </location>
</feature>
<feature type="transmembrane region" description="Helical" evidence="3">
    <location>
        <begin position="61"/>
        <end position="81"/>
    </location>
</feature>
<accession>Q1HV41</accession>
<sequence>MSLTYMNMLMAFTTSLLGLLMYRSHMMSSLLCLEGMMLSLFVMVTITILNMKFTLASMMPIILLVFAACEAALGLSLLVMVSTIYGMDYVQNLNLLKC</sequence>
<geneLocation type="mitochondrion"/>
<comment type="function">
    <text evidence="1">Core subunit of the mitochondrial membrane respiratory chain NADH dehydrogenase (Complex I) which catalyzes electron transfer from NADH through the respiratory chain, using ubiquinone as an electron acceptor. Part of the enzyme membrane arm which is embedded in the lipid bilayer and involved in proton translocation.</text>
</comment>
<comment type="catalytic activity">
    <reaction evidence="1">
        <text>a ubiquinone + NADH + 5 H(+)(in) = a ubiquinol + NAD(+) + 4 H(+)(out)</text>
        <dbReference type="Rhea" id="RHEA:29091"/>
        <dbReference type="Rhea" id="RHEA-COMP:9565"/>
        <dbReference type="Rhea" id="RHEA-COMP:9566"/>
        <dbReference type="ChEBI" id="CHEBI:15378"/>
        <dbReference type="ChEBI" id="CHEBI:16389"/>
        <dbReference type="ChEBI" id="CHEBI:17976"/>
        <dbReference type="ChEBI" id="CHEBI:57540"/>
        <dbReference type="ChEBI" id="CHEBI:57945"/>
        <dbReference type="EC" id="7.1.1.2"/>
    </reaction>
    <physiologicalReaction direction="left-to-right" evidence="1">
        <dbReference type="Rhea" id="RHEA:29092"/>
    </physiologicalReaction>
</comment>
<comment type="subunit">
    <text evidence="2">Core subunit of respiratory chain NADH dehydrogenase (Complex I) which is composed of 45 different subunits.</text>
</comment>
<comment type="subcellular location">
    <subcellularLocation>
        <location evidence="2">Mitochondrion inner membrane</location>
        <topology evidence="3">Multi-pass membrane protein</topology>
    </subcellularLocation>
</comment>
<comment type="similarity">
    <text evidence="4">Belongs to the complex I subunit 4L family.</text>
</comment>